<gene>
    <name type="primary">MGT1</name>
    <name type="ordered locus">CAALFM_C407010CA</name>
    <name type="ORF">CaO19.10620</name>
    <name type="ORF">CaO19.3108</name>
</gene>
<accession>Q5A0Y8</accession>
<accession>A0A1D8PMQ2</accession>
<organism>
    <name type="scientific">Candida albicans (strain SC5314 / ATCC MYA-2876)</name>
    <name type="common">Yeast</name>
    <dbReference type="NCBI Taxonomy" id="237561"/>
    <lineage>
        <taxon>Eukaryota</taxon>
        <taxon>Fungi</taxon>
        <taxon>Dikarya</taxon>
        <taxon>Ascomycota</taxon>
        <taxon>Saccharomycotina</taxon>
        <taxon>Pichiomycetes</taxon>
        <taxon>Debaryomycetaceae</taxon>
        <taxon>Candida/Lodderomyces clade</taxon>
        <taxon>Candida</taxon>
    </lineage>
</organism>
<proteinExistence type="inferred from homology"/>
<protein>
    <recommendedName>
        <fullName>Methylated-DNA--protein-cysteine methyltransferase</fullName>
        <ecNumber>2.1.1.63</ecNumber>
    </recommendedName>
    <alternativeName>
        <fullName>6-O-methylguanine-DNA methyltransferase</fullName>
        <shortName>MGMT</shortName>
    </alternativeName>
    <alternativeName>
        <fullName>DNA repair MTase</fullName>
    </alternativeName>
    <alternativeName>
        <fullName>O-6-methylguanine-DNA-alkyltransferase</fullName>
    </alternativeName>
</protein>
<name>MGMT_CANAL</name>
<feature type="chain" id="PRO_0000333682" description="Methylated-DNA--protein-cysteine methyltransferase">
    <location>
        <begin position="1"/>
        <end position="175"/>
    </location>
</feature>
<feature type="active site" description="Nucleophile; methyl group acceptor" evidence="2">
    <location>
        <position position="144"/>
    </location>
</feature>
<feature type="binding site" evidence="1">
    <location>
        <position position="115"/>
    </location>
    <ligand>
        <name>DNA</name>
        <dbReference type="ChEBI" id="CHEBI:16991"/>
    </ligand>
</feature>
<feature type="binding site" evidence="1">
    <location>
        <position position="127"/>
    </location>
    <ligand>
        <name>DNA</name>
        <dbReference type="ChEBI" id="CHEBI:16991"/>
    </ligand>
</feature>
<keyword id="KW-0227">DNA damage</keyword>
<keyword id="KW-0234">DNA repair</keyword>
<keyword id="KW-0238">DNA-binding</keyword>
<keyword id="KW-0489">Methyltransferase</keyword>
<keyword id="KW-0539">Nucleus</keyword>
<keyword id="KW-1185">Reference proteome</keyword>
<keyword id="KW-0808">Transferase</keyword>
<sequence length="175" mass="19492">MSNLYYTVFDTDVCTVLLVLTLNGFVCYASLGKPAIELKGIMAKDFSSLPYQLKPLSTMTGDKIEIDKSVEKFKLLVETPSVSQDIKTELLFGTPLQRKVWKELVKIPAGQTRTYKELADLLGTHSRVIGNCCGANRIAVLIPCHRVVGANNKLTGYRWGKSYKEYLLKQEGIGI</sequence>
<evidence type="ECO:0000250" key="1"/>
<evidence type="ECO:0000255" key="2">
    <source>
        <dbReference type="PROSITE-ProRule" id="PRU10017"/>
    </source>
</evidence>
<evidence type="ECO:0000305" key="3"/>
<reference key="1">
    <citation type="journal article" date="2004" name="Proc. Natl. Acad. Sci. U.S.A.">
        <title>The diploid genome sequence of Candida albicans.</title>
        <authorList>
            <person name="Jones T."/>
            <person name="Federspiel N.A."/>
            <person name="Chibana H."/>
            <person name="Dungan J."/>
            <person name="Kalman S."/>
            <person name="Magee B.B."/>
            <person name="Newport G."/>
            <person name="Thorstenson Y.R."/>
            <person name="Agabian N."/>
            <person name="Magee P.T."/>
            <person name="Davis R.W."/>
            <person name="Scherer S."/>
        </authorList>
    </citation>
    <scope>NUCLEOTIDE SEQUENCE [LARGE SCALE GENOMIC DNA]</scope>
    <source>
        <strain>SC5314 / ATCC MYA-2876</strain>
    </source>
</reference>
<reference key="2">
    <citation type="journal article" date="2007" name="Genome Biol.">
        <title>Assembly of the Candida albicans genome into sixteen supercontigs aligned on the eight chromosomes.</title>
        <authorList>
            <person name="van het Hoog M."/>
            <person name="Rast T.J."/>
            <person name="Martchenko M."/>
            <person name="Grindle S."/>
            <person name="Dignard D."/>
            <person name="Hogues H."/>
            <person name="Cuomo C."/>
            <person name="Berriman M."/>
            <person name="Scherer S."/>
            <person name="Magee B.B."/>
            <person name="Whiteway M."/>
            <person name="Chibana H."/>
            <person name="Nantel A."/>
            <person name="Magee P.T."/>
        </authorList>
    </citation>
    <scope>GENOME REANNOTATION</scope>
    <source>
        <strain>SC5314 / ATCC MYA-2876</strain>
    </source>
</reference>
<reference key="3">
    <citation type="journal article" date="2013" name="Genome Biol.">
        <title>Assembly of a phased diploid Candida albicans genome facilitates allele-specific measurements and provides a simple model for repeat and indel structure.</title>
        <authorList>
            <person name="Muzzey D."/>
            <person name="Schwartz K."/>
            <person name="Weissman J.S."/>
            <person name="Sherlock G."/>
        </authorList>
    </citation>
    <scope>NUCLEOTIDE SEQUENCE [LARGE SCALE GENOMIC DNA]</scope>
    <scope>GENOME REANNOTATION</scope>
    <source>
        <strain>SC5314 / ATCC MYA-2876</strain>
    </source>
</reference>
<comment type="function">
    <text evidence="1">Involved in the cellular defense against the biological effects of O6-methylguanine (O6-MeG) and O4-methylthymine (O4-MeT) in DNA. Repairs the methylated nucleobase in DNA by stoichiometrically transferring the methyl group to a cysteine residue in the enzyme. This is a suicide reaction: the enzyme is irreversibly inactivated.</text>
</comment>
<comment type="catalytic activity">
    <reaction evidence="2">
        <text>a 6-O-methyl-2'-deoxyguanosine in DNA + L-cysteinyl-[protein] = S-methyl-L-cysteinyl-[protein] + a 2'-deoxyguanosine in DNA</text>
        <dbReference type="Rhea" id="RHEA:24000"/>
        <dbReference type="Rhea" id="RHEA-COMP:10131"/>
        <dbReference type="Rhea" id="RHEA-COMP:10132"/>
        <dbReference type="Rhea" id="RHEA-COMP:11367"/>
        <dbReference type="Rhea" id="RHEA-COMP:11368"/>
        <dbReference type="ChEBI" id="CHEBI:29950"/>
        <dbReference type="ChEBI" id="CHEBI:82612"/>
        <dbReference type="ChEBI" id="CHEBI:85445"/>
        <dbReference type="ChEBI" id="CHEBI:85448"/>
        <dbReference type="EC" id="2.1.1.63"/>
    </reaction>
</comment>
<comment type="catalytic activity">
    <reaction evidence="2">
        <text>a 4-O-methyl-thymidine in DNA + L-cysteinyl-[protein] = a thymidine in DNA + S-methyl-L-cysteinyl-[protein]</text>
        <dbReference type="Rhea" id="RHEA:53428"/>
        <dbReference type="Rhea" id="RHEA-COMP:10131"/>
        <dbReference type="Rhea" id="RHEA-COMP:10132"/>
        <dbReference type="Rhea" id="RHEA-COMP:13555"/>
        <dbReference type="Rhea" id="RHEA-COMP:13556"/>
        <dbReference type="ChEBI" id="CHEBI:29950"/>
        <dbReference type="ChEBI" id="CHEBI:82612"/>
        <dbReference type="ChEBI" id="CHEBI:137386"/>
        <dbReference type="ChEBI" id="CHEBI:137387"/>
        <dbReference type="EC" id="2.1.1.63"/>
    </reaction>
</comment>
<comment type="subcellular location">
    <subcellularLocation>
        <location evidence="1">Nucleus</location>
    </subcellularLocation>
</comment>
<comment type="miscellaneous">
    <text>This enzyme catalyzes only one turnover and therefore is not strictly catalytic. According to one definition, an enzyme is a biocatalyst that acts repeatedly and over many reaction cycles.</text>
</comment>
<comment type="similarity">
    <text evidence="3">Belongs to the MGMT family.</text>
</comment>
<dbReference type="EC" id="2.1.1.63"/>
<dbReference type="EMBL" id="CP017626">
    <property type="protein sequence ID" value="AOW29422.1"/>
    <property type="molecule type" value="Genomic_DNA"/>
</dbReference>
<dbReference type="RefSeq" id="XP_715417.1">
    <property type="nucleotide sequence ID" value="XM_710324.1"/>
</dbReference>
<dbReference type="SMR" id="Q5A0Y8"/>
<dbReference type="FunCoup" id="Q5A0Y8">
    <property type="interactions" value="59"/>
</dbReference>
<dbReference type="STRING" id="237561.Q5A0Y8"/>
<dbReference type="EnsemblFungi" id="C4_07010C_A-T">
    <property type="protein sequence ID" value="C4_07010C_A-T-p1"/>
    <property type="gene ID" value="C4_07010C_A"/>
</dbReference>
<dbReference type="GeneID" id="3642966"/>
<dbReference type="KEGG" id="cal:CAALFM_C407010CA"/>
<dbReference type="CGD" id="CAL0000196232">
    <property type="gene designation" value="orf19.10620"/>
</dbReference>
<dbReference type="VEuPathDB" id="FungiDB:C4_07010C_A"/>
<dbReference type="eggNOG" id="KOG4062">
    <property type="taxonomic scope" value="Eukaryota"/>
</dbReference>
<dbReference type="HOGENOM" id="CLU_000445_52_2_1"/>
<dbReference type="InParanoid" id="Q5A0Y8"/>
<dbReference type="OMA" id="YTFIETE"/>
<dbReference type="OrthoDB" id="1907495at2759"/>
<dbReference type="PRO" id="PR:Q5A0Y8"/>
<dbReference type="Proteomes" id="UP000000559">
    <property type="component" value="Chromosome 4"/>
</dbReference>
<dbReference type="GO" id="GO:0005634">
    <property type="term" value="C:nucleus"/>
    <property type="evidence" value="ECO:0007669"/>
    <property type="project" value="UniProtKB-SubCell"/>
</dbReference>
<dbReference type="GO" id="GO:0003677">
    <property type="term" value="F:DNA binding"/>
    <property type="evidence" value="ECO:0007669"/>
    <property type="project" value="UniProtKB-KW"/>
</dbReference>
<dbReference type="GO" id="GO:0003908">
    <property type="term" value="F:methylated-DNA-[protein]-cysteine S-methyltransferase activity"/>
    <property type="evidence" value="ECO:0007669"/>
    <property type="project" value="UniProtKB-EC"/>
</dbReference>
<dbReference type="GO" id="GO:0006307">
    <property type="term" value="P:DNA alkylation repair"/>
    <property type="evidence" value="ECO:0007669"/>
    <property type="project" value="EnsemblFungi"/>
</dbReference>
<dbReference type="GO" id="GO:0032259">
    <property type="term" value="P:methylation"/>
    <property type="evidence" value="ECO:0007669"/>
    <property type="project" value="UniProtKB-KW"/>
</dbReference>
<dbReference type="CDD" id="cd06445">
    <property type="entry name" value="ATase"/>
    <property type="match status" value="1"/>
</dbReference>
<dbReference type="Gene3D" id="1.10.10.10">
    <property type="entry name" value="Winged helix-like DNA-binding domain superfamily/Winged helix DNA-binding domain"/>
    <property type="match status" value="1"/>
</dbReference>
<dbReference type="InterPro" id="IPR001497">
    <property type="entry name" value="MethylDNA_cys_MeTrfase_AS"/>
</dbReference>
<dbReference type="InterPro" id="IPR014048">
    <property type="entry name" value="MethylDNA_cys_MeTrfase_DNA-bd"/>
</dbReference>
<dbReference type="InterPro" id="IPR036217">
    <property type="entry name" value="MethylDNA_cys_MeTrfase_DNAb"/>
</dbReference>
<dbReference type="InterPro" id="IPR036388">
    <property type="entry name" value="WH-like_DNA-bd_sf"/>
</dbReference>
<dbReference type="NCBIfam" id="TIGR00589">
    <property type="entry name" value="ogt"/>
    <property type="match status" value="1"/>
</dbReference>
<dbReference type="PANTHER" id="PTHR10815">
    <property type="entry name" value="METHYLATED-DNA--PROTEIN-CYSTEINE METHYLTRANSFERASE"/>
    <property type="match status" value="1"/>
</dbReference>
<dbReference type="PANTHER" id="PTHR10815:SF13">
    <property type="entry name" value="METHYLATED-DNA--PROTEIN-CYSTEINE METHYLTRANSFERASE"/>
    <property type="match status" value="1"/>
</dbReference>
<dbReference type="Pfam" id="PF01035">
    <property type="entry name" value="DNA_binding_1"/>
    <property type="match status" value="1"/>
</dbReference>
<dbReference type="SUPFAM" id="SSF46767">
    <property type="entry name" value="Methylated DNA-protein cysteine methyltransferase, C-terminal domain"/>
    <property type="match status" value="1"/>
</dbReference>
<dbReference type="PROSITE" id="PS00374">
    <property type="entry name" value="MGMT"/>
    <property type="match status" value="1"/>
</dbReference>